<evidence type="ECO:0000250" key="1"/>
<evidence type="ECO:0000250" key="2">
    <source>
        <dbReference type="UniProtKB" id="P28966"/>
    </source>
</evidence>
<evidence type="ECO:0000255" key="3">
    <source>
        <dbReference type="PROSITE-ProRule" id="PRU00159"/>
    </source>
</evidence>
<evidence type="ECO:0000255" key="4">
    <source>
        <dbReference type="PROSITE-ProRule" id="PRU10027"/>
    </source>
</evidence>
<evidence type="ECO:0000256" key="5">
    <source>
        <dbReference type="SAM" id="MobiDB-lite"/>
    </source>
</evidence>
<evidence type="ECO:0000305" key="6"/>
<evidence type="ECO:0000312" key="7">
    <source>
        <dbReference type="EMBL" id="AAS45933.1"/>
    </source>
</evidence>
<keyword id="KW-0067">ATP-binding</keyword>
<keyword id="KW-1048">Host nucleus</keyword>
<keyword id="KW-0418">Kinase</keyword>
<keyword id="KW-0547">Nucleotide-binding</keyword>
<keyword id="KW-0723">Serine/threonine-protein kinase</keyword>
<keyword id="KW-0808">Transferase</keyword>
<keyword id="KW-0946">Virion</keyword>
<keyword id="KW-0920">Virion tegument</keyword>
<reference evidence="6 7" key="1">
    <citation type="submission" date="2003-11" db="EMBL/GenBank/DDBJ databases">
        <authorList>
            <person name="Davis-Poynter N."/>
            <person name="Nugent J."/>
            <person name="Birch-Machin I."/>
            <person name="Allen G.P."/>
        </authorList>
    </citation>
    <scope>NUCLEOTIDE SEQUENCE [LARGE SCALE GENOMIC DNA]</scope>
</reference>
<dbReference type="EC" id="2.7.11.1"/>
<dbReference type="EMBL" id="AY464052">
    <property type="protein sequence ID" value="AAS45933.1"/>
    <property type="molecule type" value="Genomic_DNA"/>
</dbReference>
<dbReference type="KEGG" id="vg:1487528"/>
<dbReference type="Proteomes" id="UP000008296">
    <property type="component" value="Segment"/>
</dbReference>
<dbReference type="GO" id="GO:0042025">
    <property type="term" value="C:host cell nucleus"/>
    <property type="evidence" value="ECO:0007669"/>
    <property type="project" value="UniProtKB-SubCell"/>
</dbReference>
<dbReference type="GO" id="GO:0019033">
    <property type="term" value="C:viral tegument"/>
    <property type="evidence" value="ECO:0007669"/>
    <property type="project" value="UniProtKB-SubCell"/>
</dbReference>
<dbReference type="GO" id="GO:0005524">
    <property type="term" value="F:ATP binding"/>
    <property type="evidence" value="ECO:0007669"/>
    <property type="project" value="UniProtKB-KW"/>
</dbReference>
<dbReference type="GO" id="GO:0106310">
    <property type="term" value="F:protein serine kinase activity"/>
    <property type="evidence" value="ECO:0007669"/>
    <property type="project" value="RHEA"/>
</dbReference>
<dbReference type="GO" id="GO:0004674">
    <property type="term" value="F:protein serine/threonine kinase activity"/>
    <property type="evidence" value="ECO:0007669"/>
    <property type="project" value="UniProtKB-KW"/>
</dbReference>
<dbReference type="Gene3D" id="1.10.510.10">
    <property type="entry name" value="Transferase(Phosphotransferase) domain 1"/>
    <property type="match status" value="1"/>
</dbReference>
<dbReference type="InterPro" id="IPR011009">
    <property type="entry name" value="Kinase-like_dom_sf"/>
</dbReference>
<dbReference type="InterPro" id="IPR000719">
    <property type="entry name" value="Prot_kinase_dom"/>
</dbReference>
<dbReference type="InterPro" id="IPR008271">
    <property type="entry name" value="Ser/Thr_kinase_AS"/>
</dbReference>
<dbReference type="SUPFAM" id="SSF56112">
    <property type="entry name" value="Protein kinase-like (PK-like)"/>
    <property type="match status" value="1"/>
</dbReference>
<dbReference type="PROSITE" id="PS50011">
    <property type="entry name" value="PROTEIN_KINASE_DOM"/>
    <property type="match status" value="1"/>
</dbReference>
<dbReference type="PROSITE" id="PS00108">
    <property type="entry name" value="PROTEIN_KINASE_ST"/>
    <property type="match status" value="1"/>
</dbReference>
<organismHost>
    <name type="scientific">Equus caballus</name>
    <name type="common">Horse</name>
    <dbReference type="NCBI Taxonomy" id="9796"/>
</organismHost>
<name>UL13_EHV1V</name>
<feature type="chain" id="PRO_0000086186" description="Serine/threonine-protein kinase UL13 homolog">
    <location>
        <begin position="1"/>
        <end position="594"/>
    </location>
</feature>
<feature type="domain" description="Protein kinase" evidence="3">
    <location>
        <begin position="223"/>
        <end position="594"/>
    </location>
</feature>
<feature type="region of interest" description="Disordered" evidence="5">
    <location>
        <begin position="1"/>
        <end position="105"/>
    </location>
</feature>
<feature type="region of interest" description="Disordered" evidence="5">
    <location>
        <begin position="128"/>
        <end position="183"/>
    </location>
</feature>
<feature type="compositionally biased region" description="Basic residues" evidence="5">
    <location>
        <begin position="38"/>
        <end position="47"/>
    </location>
</feature>
<feature type="active site" description="Proton acceptor" evidence="2 3 4">
    <location>
        <position position="349"/>
    </location>
</feature>
<feature type="binding site" evidence="2 3">
    <location>
        <begin position="229"/>
        <end position="237"/>
    </location>
    <ligand>
        <name>ATP</name>
        <dbReference type="ChEBI" id="CHEBI:30616"/>
    </ligand>
</feature>
<feature type="binding site" evidence="2 3">
    <location>
        <position position="248"/>
    </location>
    <ligand>
        <name>ATP</name>
        <dbReference type="ChEBI" id="CHEBI:30616"/>
    </ligand>
</feature>
<accession>P84391</accession>
<accession>Q6S6S3</accession>
<sequence length="594" mass="65248">MARSRRRSSVDEMDVGGSATSEYENCGGPSFSPLNLSRPKKSTRGRSLRSAQAWGGKQLHPERSTPLARNDCGPSSKPRRRHEVGRSNKGLGASLDRTDEDTSQCPRIRASAIRCGASTRKIVRITGECDAQQGDSRPGRSEMAGWHSPPKRRRTPSRHGNSDNERSHLPRLSSHGVVRVGGRPLTQTPLQKTIILQPKLVRKVFMPTFTVNPEMHYRRVALGEIPKFGGAGSYGEVQIFKQTGLAIKTASSRSCFEHELAVSLLTGECSLRAQASLGIGGIICLMAFSLPSKQMVFPAYDADLNAYGYRLSRSGPPSVLVTESIERAFIGLGRALVYLNTSCGLTHLDVKGGNIFVNHSHFVISDCVIGDLSLMTLNTNSMAMRAEFEIDTGEEEIKTLRLPRSASQMTFSFVIGHGLNQPISVIADFINNSGLAKSTGPIKHDVGLTIDLYALGQALLELLLVGCISPCLSVPILRTATYYYYSNKLSVDYALDLLAYRCSLYPALFPTTPLTTIYGIPWDQVEGVFESIAGAHHREAFRAHLERYRLTHRRLFASIRIPSAFTGVLELVSLLCHANEKARLSIPLLWTPRP</sequence>
<comment type="function">
    <text evidence="1">Multifunctional serine/threonine kinase that plays a role in several processes including egress of virus particles from the nucleus, modulation of the actin cytoskeleton and regulation of viral and cellular gene expression. Regulates the nuclear localization of viral envelopment factors UL34 and UL31 homologs, by phosphorylating the US3 kinase homolog, indicating a role in nuclear egress. Disrupts host nuclear lamins, including LMNA and LMNB1. Phosphorylates the viral Fc receptor composed of glycoproteins E (gE) and I (gI). Phosphorylation of glycoprotein E (gE) by UL13 homolog alters its subcellular localization, from the host early endosome to the plasma membrane. Participates in the transcriptional regulation of cellular and viral mRNAs mainly by phosphorylating the viral transcriptional regulator ICP22 homolog (By similarity).</text>
</comment>
<comment type="catalytic activity">
    <reaction evidence="2">
        <text>L-seryl-[protein] + ATP = O-phospho-L-seryl-[protein] + ADP + H(+)</text>
        <dbReference type="Rhea" id="RHEA:17989"/>
        <dbReference type="Rhea" id="RHEA-COMP:9863"/>
        <dbReference type="Rhea" id="RHEA-COMP:11604"/>
        <dbReference type="ChEBI" id="CHEBI:15378"/>
        <dbReference type="ChEBI" id="CHEBI:29999"/>
        <dbReference type="ChEBI" id="CHEBI:30616"/>
        <dbReference type="ChEBI" id="CHEBI:83421"/>
        <dbReference type="ChEBI" id="CHEBI:456216"/>
        <dbReference type="EC" id="2.7.11.1"/>
    </reaction>
</comment>
<comment type="catalytic activity">
    <reaction evidence="2">
        <text>L-threonyl-[protein] + ATP = O-phospho-L-threonyl-[protein] + ADP + H(+)</text>
        <dbReference type="Rhea" id="RHEA:46608"/>
        <dbReference type="Rhea" id="RHEA-COMP:11060"/>
        <dbReference type="Rhea" id="RHEA-COMP:11605"/>
        <dbReference type="ChEBI" id="CHEBI:15378"/>
        <dbReference type="ChEBI" id="CHEBI:30013"/>
        <dbReference type="ChEBI" id="CHEBI:30616"/>
        <dbReference type="ChEBI" id="CHEBI:61977"/>
        <dbReference type="ChEBI" id="CHEBI:456216"/>
        <dbReference type="EC" id="2.7.11.1"/>
    </reaction>
</comment>
<comment type="subcellular location">
    <subcellularLocation>
        <location evidence="1">Virion tegument</location>
    </subcellularLocation>
    <subcellularLocation>
        <location evidence="1">Host nucleus</location>
    </subcellularLocation>
</comment>
<comment type="PTM">
    <text evidence="1">Autophosphorylated.</text>
</comment>
<comment type="miscellaneous">
    <text>Displays a substrate specificity similar to host CDC2.</text>
</comment>
<comment type="similarity">
    <text evidence="3">Belongs to the protein kinase superfamily. Ser/Thr protein kinase family.</text>
</comment>
<organism>
    <name type="scientific">Equine herpesvirus 1 (strain V592)</name>
    <name type="common">EHV-1</name>
    <name type="synonym">Equine abortion virus</name>
    <dbReference type="NCBI Taxonomy" id="310273"/>
    <lineage>
        <taxon>Viruses</taxon>
        <taxon>Duplodnaviria</taxon>
        <taxon>Heunggongvirae</taxon>
        <taxon>Peploviricota</taxon>
        <taxon>Herviviricetes</taxon>
        <taxon>Herpesvirales</taxon>
        <taxon>Orthoherpesviridae</taxon>
        <taxon>Alphaherpesvirinae</taxon>
        <taxon>Varicellovirus</taxon>
        <taxon>Varicellovirus equidalpha1</taxon>
        <taxon>Equid alphaherpesvirus 1</taxon>
    </lineage>
</organism>
<protein>
    <recommendedName>
        <fullName>Serine/threonine-protein kinase UL13 homolog</fullName>
        <ecNumber>2.7.11.1</ecNumber>
    </recommendedName>
</protein>
<gene>
    <name type="ordered locus">49</name>
</gene>
<proteinExistence type="inferred from homology"/>